<feature type="chain" id="PRO_0000089052" description="Actin, cytoplasmic type 5">
    <location>
        <begin position="1"/>
        <end position="376"/>
    </location>
</feature>
<feature type="modified residue" description="Methionine (R)-sulfoxide" evidence="1">
    <location>
        <position position="45"/>
    </location>
</feature>
<feature type="modified residue" description="Methionine (R)-sulfoxide" evidence="1">
    <location>
        <position position="48"/>
    </location>
</feature>
<sequence length="376" mass="41836">MADEEIAALVVDNGSGMCKAGFAGDDAPRAVFPSIVGRPRHQGVMVGMGQKDSYVGDEAQSKRGILTLKYPIEHGIVTNWDDMEKIWHHTFYNELRVAPEEHPVLLTEAPLNPKANREKMTQIMFETFNTPAMYVAIQAVLSLYASGRTTGIVMDSGDGVTHTVPIYEGYALPHAILRLDLAGRDLTDYLMKILTERGYSFTTTAEREIVRDIKEKLCYVALDFEQEMATAASSSSLEKSYELPDGQVITIGNERFRCPEAIFQPSFLGMESCGIHETTFNSIMKCDVDIRKDLYANTVLSGGTTMYPGIADRMQKEITALAPSTMKIKIIAPPERKYSVWIGGSILASLSTFQQMWISKQEYDESGPSIVHRKCF</sequence>
<protein>
    <recommendedName>
        <fullName>Actin, cytoplasmic type 5</fullName>
        <ecNumber evidence="2">3.6.4.-</ecNumber>
    </recommendedName>
</protein>
<accession>P53478</accession>
<organism>
    <name type="scientific">Gallus gallus</name>
    <name type="common">Chicken</name>
    <dbReference type="NCBI Taxonomy" id="9031"/>
    <lineage>
        <taxon>Eukaryota</taxon>
        <taxon>Metazoa</taxon>
        <taxon>Chordata</taxon>
        <taxon>Craniata</taxon>
        <taxon>Vertebrata</taxon>
        <taxon>Euteleostomi</taxon>
        <taxon>Archelosauria</taxon>
        <taxon>Archosauria</taxon>
        <taxon>Dinosauria</taxon>
        <taxon>Saurischia</taxon>
        <taxon>Theropoda</taxon>
        <taxon>Coelurosauria</taxon>
        <taxon>Aves</taxon>
        <taxon>Neognathae</taxon>
        <taxon>Galloanserae</taxon>
        <taxon>Galliformes</taxon>
        <taxon>Phasianidae</taxon>
        <taxon>Phasianinae</taxon>
        <taxon>Gallus</taxon>
    </lineage>
</organism>
<comment type="function">
    <text>Actins are highly conserved proteins that are involved in various types of cell motility and are ubiquitously expressed in all eukaryotic cells.</text>
</comment>
<comment type="catalytic activity">
    <reaction evidence="2">
        <text>ATP + H2O = ADP + phosphate + H(+)</text>
        <dbReference type="Rhea" id="RHEA:13065"/>
        <dbReference type="ChEBI" id="CHEBI:15377"/>
        <dbReference type="ChEBI" id="CHEBI:15378"/>
        <dbReference type="ChEBI" id="CHEBI:30616"/>
        <dbReference type="ChEBI" id="CHEBI:43474"/>
        <dbReference type="ChEBI" id="CHEBI:456216"/>
    </reaction>
</comment>
<comment type="subunit">
    <text>Polymerization of globular actin (G-actin) leads to a structural filament (F-actin) in the form of a two-stranded helix. Each actin can bind to 4 others.</text>
</comment>
<comment type="subcellular location">
    <subcellularLocation>
        <location>Cytoplasm</location>
        <location>Cytoskeleton</location>
    </subcellularLocation>
</comment>
<comment type="PTM">
    <text evidence="1">Oxidation of Met-45 and Met-48 by MICALs (MICAL1, MICAL2 or MICAL3) to form methionine sulfoxide promotes actin filament depolymerization. MICAL1 and MICAL2 produce the (R)-S-oxide form. The (R)-S-oxide form is reverted by MSRB1 and MSRB2, which promote actin repolymerization (By similarity).</text>
</comment>
<comment type="similarity">
    <text evidence="3">Belongs to the actin family.</text>
</comment>
<dbReference type="EC" id="3.6.4.-" evidence="2"/>
<dbReference type="EMBL" id="X02648">
    <property type="protein sequence ID" value="CAA26486.1"/>
    <property type="molecule type" value="Genomic_DNA"/>
</dbReference>
<dbReference type="PIR" id="A26559">
    <property type="entry name" value="A26559"/>
</dbReference>
<dbReference type="RefSeq" id="NP_001007825.1">
    <property type="nucleotide sequence ID" value="NM_001007824.3"/>
</dbReference>
<dbReference type="SMR" id="P53478"/>
<dbReference type="BioGRID" id="676968">
    <property type="interactions" value="3"/>
</dbReference>
<dbReference type="FunCoup" id="P53478">
    <property type="interactions" value="1832"/>
</dbReference>
<dbReference type="PaxDb" id="9031-ENSGALP00000039176"/>
<dbReference type="Ensembl" id="ENSGALT00000118098">
    <property type="protein sequence ID" value="ENSGALP00000094440"/>
    <property type="gene ID" value="ENSGALG00000061357"/>
</dbReference>
<dbReference type="Ensembl" id="ENSGALT00000134996">
    <property type="protein sequence ID" value="ENSGALP00000093679"/>
    <property type="gene ID" value="ENSGALG00000061357"/>
</dbReference>
<dbReference type="Ensembl" id="ENSGALT00010051244.1">
    <property type="protein sequence ID" value="ENSGALP00010030435.1"/>
    <property type="gene ID" value="ENSGALG00010021158.1"/>
</dbReference>
<dbReference type="Ensembl" id="ENSGALT00010051249.1">
    <property type="protein sequence ID" value="ENSGALP00010030440.1"/>
    <property type="gene ID" value="ENSGALG00010021158.1"/>
</dbReference>
<dbReference type="GeneID" id="415296"/>
<dbReference type="KEGG" id="gga:415296"/>
<dbReference type="CTD" id="415296"/>
<dbReference type="VEuPathDB" id="HostDB:geneid_415296"/>
<dbReference type="eggNOG" id="KOG0676">
    <property type="taxonomic scope" value="Eukaryota"/>
</dbReference>
<dbReference type="GeneTree" id="ENSGT00950000182960"/>
<dbReference type="HOGENOM" id="CLU_027965_0_2_1"/>
<dbReference type="InParanoid" id="P53478"/>
<dbReference type="OMA" id="GKEACGI"/>
<dbReference type="OrthoDB" id="9240758at2759"/>
<dbReference type="PhylomeDB" id="P53478"/>
<dbReference type="TreeFam" id="TF354237"/>
<dbReference type="PRO" id="PR:P53478"/>
<dbReference type="Proteomes" id="UP000000539">
    <property type="component" value="Chromosome 10"/>
</dbReference>
<dbReference type="GO" id="GO:0015629">
    <property type="term" value="C:actin cytoskeleton"/>
    <property type="evidence" value="ECO:0000318"/>
    <property type="project" value="GO_Central"/>
</dbReference>
<dbReference type="GO" id="GO:0005884">
    <property type="term" value="C:actin filament"/>
    <property type="evidence" value="ECO:0000318"/>
    <property type="project" value="GO_Central"/>
</dbReference>
<dbReference type="GO" id="GO:0030424">
    <property type="term" value="C:axon"/>
    <property type="evidence" value="ECO:0000318"/>
    <property type="project" value="GO_Central"/>
</dbReference>
<dbReference type="GO" id="GO:0005737">
    <property type="term" value="C:cytoplasm"/>
    <property type="evidence" value="ECO:0000318"/>
    <property type="project" value="GO_Central"/>
</dbReference>
<dbReference type="GO" id="GO:0005856">
    <property type="term" value="C:cytoskeleton"/>
    <property type="evidence" value="ECO:0000250"/>
    <property type="project" value="AgBase"/>
</dbReference>
<dbReference type="GO" id="GO:0097433">
    <property type="term" value="C:dense body"/>
    <property type="evidence" value="ECO:0000250"/>
    <property type="project" value="AgBase"/>
</dbReference>
<dbReference type="GO" id="GO:0005925">
    <property type="term" value="C:focal adhesion"/>
    <property type="evidence" value="ECO:0000250"/>
    <property type="project" value="AgBase"/>
</dbReference>
<dbReference type="GO" id="GO:0016020">
    <property type="term" value="C:membrane"/>
    <property type="evidence" value="ECO:0000318"/>
    <property type="project" value="GO_Central"/>
</dbReference>
<dbReference type="GO" id="GO:0035267">
    <property type="term" value="C:NuA4 histone acetyltransferase complex"/>
    <property type="evidence" value="ECO:0000318"/>
    <property type="project" value="GO_Central"/>
</dbReference>
<dbReference type="GO" id="GO:0005886">
    <property type="term" value="C:plasma membrane"/>
    <property type="evidence" value="ECO:0000250"/>
    <property type="project" value="AgBase"/>
</dbReference>
<dbReference type="GO" id="GO:0045202">
    <property type="term" value="C:synapse"/>
    <property type="evidence" value="ECO:0000318"/>
    <property type="project" value="GO_Central"/>
</dbReference>
<dbReference type="GO" id="GO:0005524">
    <property type="term" value="F:ATP binding"/>
    <property type="evidence" value="ECO:0007669"/>
    <property type="project" value="UniProtKB-KW"/>
</dbReference>
<dbReference type="GO" id="GO:0016787">
    <property type="term" value="F:hydrolase activity"/>
    <property type="evidence" value="ECO:0007669"/>
    <property type="project" value="UniProtKB-KW"/>
</dbReference>
<dbReference type="GO" id="GO:0019901">
    <property type="term" value="F:protein kinase binding"/>
    <property type="evidence" value="ECO:0000318"/>
    <property type="project" value="GO_Central"/>
</dbReference>
<dbReference type="GO" id="GO:0098973">
    <property type="term" value="F:structural constituent of postsynaptic actin cytoskeleton"/>
    <property type="evidence" value="ECO:0000318"/>
    <property type="project" value="GO_Central"/>
</dbReference>
<dbReference type="GO" id="GO:0007409">
    <property type="term" value="P:axonogenesis"/>
    <property type="evidence" value="ECO:0000318"/>
    <property type="project" value="GO_Central"/>
</dbReference>
<dbReference type="GO" id="GO:0048870">
    <property type="term" value="P:cell motility"/>
    <property type="evidence" value="ECO:0000318"/>
    <property type="project" value="GO_Central"/>
</dbReference>
<dbReference type="CDD" id="cd10224">
    <property type="entry name" value="ASKHA_NBD_actin"/>
    <property type="match status" value="1"/>
</dbReference>
<dbReference type="FunFam" id="3.30.420.40:FF:000131">
    <property type="entry name" value="Actin, alpha skeletal muscle"/>
    <property type="match status" value="1"/>
</dbReference>
<dbReference type="FunFam" id="3.30.420.40:FF:000291">
    <property type="entry name" value="Actin, alpha skeletal muscle"/>
    <property type="match status" value="1"/>
</dbReference>
<dbReference type="FunFam" id="3.90.640.10:FF:000047">
    <property type="entry name" value="Actin, alpha skeletal muscle"/>
    <property type="match status" value="1"/>
</dbReference>
<dbReference type="FunFam" id="3.30.420.40:FF:000058">
    <property type="entry name" value="Putative actin-related protein 5"/>
    <property type="match status" value="1"/>
</dbReference>
<dbReference type="Gene3D" id="3.30.420.40">
    <property type="match status" value="2"/>
</dbReference>
<dbReference type="Gene3D" id="3.90.640.10">
    <property type="entry name" value="Actin, Chain A, domain 4"/>
    <property type="match status" value="1"/>
</dbReference>
<dbReference type="InterPro" id="IPR004000">
    <property type="entry name" value="Actin"/>
</dbReference>
<dbReference type="InterPro" id="IPR020902">
    <property type="entry name" value="Actin/actin-like_CS"/>
</dbReference>
<dbReference type="InterPro" id="IPR004001">
    <property type="entry name" value="Actin_CS"/>
</dbReference>
<dbReference type="InterPro" id="IPR043129">
    <property type="entry name" value="ATPase_NBD"/>
</dbReference>
<dbReference type="PANTHER" id="PTHR11937">
    <property type="entry name" value="ACTIN"/>
    <property type="match status" value="1"/>
</dbReference>
<dbReference type="Pfam" id="PF00022">
    <property type="entry name" value="Actin"/>
    <property type="match status" value="1"/>
</dbReference>
<dbReference type="PRINTS" id="PR00190">
    <property type="entry name" value="ACTIN"/>
</dbReference>
<dbReference type="SMART" id="SM00268">
    <property type="entry name" value="ACTIN"/>
    <property type="match status" value="1"/>
</dbReference>
<dbReference type="SUPFAM" id="SSF53067">
    <property type="entry name" value="Actin-like ATPase domain"/>
    <property type="match status" value="2"/>
</dbReference>
<dbReference type="PROSITE" id="PS00406">
    <property type="entry name" value="ACTINS_1"/>
    <property type="match status" value="1"/>
</dbReference>
<dbReference type="PROSITE" id="PS00432">
    <property type="entry name" value="ACTINS_2"/>
    <property type="match status" value="1"/>
</dbReference>
<dbReference type="PROSITE" id="PS01132">
    <property type="entry name" value="ACTINS_ACT_LIKE"/>
    <property type="match status" value="1"/>
</dbReference>
<evidence type="ECO:0000250" key="1"/>
<evidence type="ECO:0000250" key="2">
    <source>
        <dbReference type="UniProtKB" id="P68137"/>
    </source>
</evidence>
<evidence type="ECO:0000305" key="3"/>
<reference key="1">
    <citation type="journal article" date="1985" name="Mol. Cell. Biol.">
        <title>Novel chicken actin gene: third cytoplasmic isoform.</title>
        <authorList>
            <person name="Bergsma D.J."/>
            <person name="Chang K.S."/>
            <person name="Schwartz R.J."/>
        </authorList>
    </citation>
    <scope>NUCLEOTIDE SEQUENCE [GENOMIC DNA]</scope>
</reference>
<name>ACT5_CHICK</name>
<keyword id="KW-0067">ATP-binding</keyword>
<keyword id="KW-0963">Cytoplasm</keyword>
<keyword id="KW-0206">Cytoskeleton</keyword>
<keyword id="KW-0378">Hydrolase</keyword>
<keyword id="KW-0547">Nucleotide-binding</keyword>
<keyword id="KW-0558">Oxidation</keyword>
<keyword id="KW-1185">Reference proteome</keyword>
<proteinExistence type="inferred from homology"/>